<dbReference type="EC" id="7.1.1.9"/>
<dbReference type="EMBL" id="CP000087">
    <property type="protein sequence ID" value="ABE05185.1"/>
    <property type="molecule type" value="Genomic_DNA"/>
</dbReference>
<dbReference type="RefSeq" id="WP_011477763.1">
    <property type="nucleotide sequence ID" value="NC_007940.1"/>
</dbReference>
<dbReference type="SMR" id="Q1RHH9"/>
<dbReference type="KEGG" id="rbe:RBE_1104"/>
<dbReference type="eggNOG" id="COG1845">
    <property type="taxonomic scope" value="Bacteria"/>
</dbReference>
<dbReference type="HOGENOM" id="CLU_044071_0_0_5"/>
<dbReference type="OrthoDB" id="9810850at2"/>
<dbReference type="Proteomes" id="UP000001951">
    <property type="component" value="Chromosome"/>
</dbReference>
<dbReference type="GO" id="GO:0005886">
    <property type="term" value="C:plasma membrane"/>
    <property type="evidence" value="ECO:0007669"/>
    <property type="project" value="UniProtKB-SubCell"/>
</dbReference>
<dbReference type="GO" id="GO:0004129">
    <property type="term" value="F:cytochrome-c oxidase activity"/>
    <property type="evidence" value="ECO:0007669"/>
    <property type="project" value="UniProtKB-EC"/>
</dbReference>
<dbReference type="GO" id="GO:0019646">
    <property type="term" value="P:aerobic electron transport chain"/>
    <property type="evidence" value="ECO:0007669"/>
    <property type="project" value="InterPro"/>
</dbReference>
<dbReference type="CDD" id="cd01665">
    <property type="entry name" value="Cyt_c_Oxidase_III"/>
    <property type="match status" value="1"/>
</dbReference>
<dbReference type="FunFam" id="1.10.287.70:FF:000082">
    <property type="entry name" value="Cytochrome c oxidase subunit 3"/>
    <property type="match status" value="1"/>
</dbReference>
<dbReference type="FunFam" id="1.20.120.80:FF:000003">
    <property type="entry name" value="Cytochrome c oxidase subunit 3"/>
    <property type="match status" value="1"/>
</dbReference>
<dbReference type="Gene3D" id="1.10.287.70">
    <property type="match status" value="1"/>
</dbReference>
<dbReference type="Gene3D" id="1.20.120.80">
    <property type="entry name" value="Cytochrome c oxidase, subunit III, four-helix bundle"/>
    <property type="match status" value="1"/>
</dbReference>
<dbReference type="InterPro" id="IPR024791">
    <property type="entry name" value="Cyt_c/ubiquinol_Oxase_su3"/>
</dbReference>
<dbReference type="InterPro" id="IPR033945">
    <property type="entry name" value="Cyt_c_oxase_su3_dom"/>
</dbReference>
<dbReference type="InterPro" id="IPR000298">
    <property type="entry name" value="Cyt_c_oxidase-like_su3"/>
</dbReference>
<dbReference type="InterPro" id="IPR035973">
    <property type="entry name" value="Cyt_c_oxidase_su3-like_sf"/>
</dbReference>
<dbReference type="InterPro" id="IPR013833">
    <property type="entry name" value="Cyt_c_oxidase_su3_a-hlx"/>
</dbReference>
<dbReference type="PANTHER" id="PTHR11403:SF7">
    <property type="entry name" value="CYTOCHROME C OXIDASE SUBUNIT 3"/>
    <property type="match status" value="1"/>
</dbReference>
<dbReference type="PANTHER" id="PTHR11403">
    <property type="entry name" value="CYTOCHROME C OXIDASE SUBUNIT III"/>
    <property type="match status" value="1"/>
</dbReference>
<dbReference type="Pfam" id="PF00510">
    <property type="entry name" value="COX3"/>
    <property type="match status" value="1"/>
</dbReference>
<dbReference type="SUPFAM" id="SSF81452">
    <property type="entry name" value="Cytochrome c oxidase subunit III-like"/>
    <property type="match status" value="1"/>
</dbReference>
<dbReference type="PROSITE" id="PS50253">
    <property type="entry name" value="COX3"/>
    <property type="match status" value="1"/>
</dbReference>
<sequence>MNNSHPTTKSHLFHIVDPSPWPILTSFALLILVAGGVSFMHSYKFNHYILAFGVISVAYCLYSWWRDVIKEGIIDHSHTEPVRHGLRIGMALFILTEIMFFGVFFASFFKSSLSPVGLLDGVWVIKQGVWPPPNIKVFDPFDIPFINTLILLLSGTTVTWAHYALEERNQKDCVTALGLTIILGIFFTCMQAYEYYHAAFKFTDGIYPSNFYLATGFHGAHVIIGTIFLIVCCFRARRGDFAIKNNGHLGFEFAAWYWHFVDVVWLFLFTFVYIFGS</sequence>
<keyword id="KW-1003">Cell membrane</keyword>
<keyword id="KW-0472">Membrane</keyword>
<keyword id="KW-1278">Translocase</keyword>
<keyword id="KW-0812">Transmembrane</keyword>
<keyword id="KW-1133">Transmembrane helix</keyword>
<organism>
    <name type="scientific">Rickettsia bellii (strain RML369-C)</name>
    <dbReference type="NCBI Taxonomy" id="336407"/>
    <lineage>
        <taxon>Bacteria</taxon>
        <taxon>Pseudomonadati</taxon>
        <taxon>Pseudomonadota</taxon>
        <taxon>Alphaproteobacteria</taxon>
        <taxon>Rickettsiales</taxon>
        <taxon>Rickettsiaceae</taxon>
        <taxon>Rickettsieae</taxon>
        <taxon>Rickettsia</taxon>
        <taxon>belli group</taxon>
    </lineage>
</organism>
<feature type="chain" id="PRO_0000280888" description="Probable cytochrome c oxidase subunit 3">
    <location>
        <begin position="1"/>
        <end position="277"/>
    </location>
</feature>
<feature type="transmembrane region" description="Helical" evidence="2">
    <location>
        <begin position="20"/>
        <end position="40"/>
    </location>
</feature>
<feature type="transmembrane region" description="Helical" evidence="2">
    <location>
        <begin position="45"/>
        <end position="65"/>
    </location>
</feature>
<feature type="transmembrane region" description="Helical" evidence="2">
    <location>
        <begin position="88"/>
        <end position="108"/>
    </location>
</feature>
<feature type="transmembrane region" description="Helical" evidence="2">
    <location>
        <begin position="173"/>
        <end position="193"/>
    </location>
</feature>
<feature type="transmembrane region" description="Helical" evidence="2">
    <location>
        <begin position="211"/>
        <end position="231"/>
    </location>
</feature>
<feature type="transmembrane region" description="Helical" evidence="2">
    <location>
        <begin position="255"/>
        <end position="275"/>
    </location>
</feature>
<proteinExistence type="inferred from homology"/>
<protein>
    <recommendedName>
        <fullName>Probable cytochrome c oxidase subunit 3</fullName>
        <ecNumber>7.1.1.9</ecNumber>
    </recommendedName>
    <alternativeName>
        <fullName>Cytochrome aa3 subunit 3</fullName>
    </alternativeName>
    <alternativeName>
        <fullName>Cytochrome c oxidase polypeptide III</fullName>
    </alternativeName>
</protein>
<name>COX3_RICBR</name>
<accession>Q1RHH9</accession>
<reference key="1">
    <citation type="journal article" date="2006" name="PLoS Genet.">
        <title>Genome sequence of Rickettsia bellii illuminates the role of amoebae in gene exchanges between intracellular pathogens.</title>
        <authorList>
            <person name="Ogata H."/>
            <person name="La Scola B."/>
            <person name="Audic S."/>
            <person name="Renesto P."/>
            <person name="Blanc G."/>
            <person name="Robert C."/>
            <person name="Fournier P.-E."/>
            <person name="Claverie J.-M."/>
            <person name="Raoult D."/>
        </authorList>
    </citation>
    <scope>NUCLEOTIDE SEQUENCE [LARGE SCALE GENOMIC DNA]</scope>
    <source>
        <strain>RML369-C</strain>
    </source>
</reference>
<comment type="catalytic activity">
    <reaction>
        <text>4 Fe(II)-[cytochrome c] + O2 + 8 H(+)(in) = 4 Fe(III)-[cytochrome c] + 2 H2O + 4 H(+)(out)</text>
        <dbReference type="Rhea" id="RHEA:11436"/>
        <dbReference type="Rhea" id="RHEA-COMP:10350"/>
        <dbReference type="Rhea" id="RHEA-COMP:14399"/>
        <dbReference type="ChEBI" id="CHEBI:15377"/>
        <dbReference type="ChEBI" id="CHEBI:15378"/>
        <dbReference type="ChEBI" id="CHEBI:15379"/>
        <dbReference type="ChEBI" id="CHEBI:29033"/>
        <dbReference type="ChEBI" id="CHEBI:29034"/>
        <dbReference type="EC" id="7.1.1.9"/>
    </reaction>
</comment>
<comment type="subcellular location">
    <subcellularLocation>
        <location evidence="1">Cell membrane</location>
        <topology evidence="1">Multi-pass membrane protein</topology>
    </subcellularLocation>
</comment>
<comment type="similarity">
    <text evidence="3">Belongs to the cytochrome c oxidase subunit 3 family.</text>
</comment>
<evidence type="ECO:0000250" key="1"/>
<evidence type="ECO:0000255" key="2"/>
<evidence type="ECO:0000305" key="3"/>
<gene>
    <name type="primary">ctaE</name>
    <name type="synonym">coxC</name>
    <name type="ordered locus">RBE_1104</name>
</gene>